<sequence>MKYQQLENLESGWKWKYLVKKHREGELITRYVEASAAQEAVNLLLALENEPVRVNVWIDRHMNPALLNRMKQTIRARRKRHFNAEHQHTRKKSIDLEFMVWQRLAGLAQRRGKTLSETIVQLIEDAEHKEKYATQMTTLKQDLQALLGKK</sequence>
<evidence type="ECO:0000255" key="1">
    <source>
        <dbReference type="HAMAP-Rule" id="MF_01073"/>
    </source>
</evidence>
<keyword id="KW-0131">Cell cycle</keyword>
<keyword id="KW-0132">Cell division</keyword>
<keyword id="KW-0963">Cytoplasm</keyword>
<keyword id="KW-0238">DNA-binding</keyword>
<feature type="chain" id="PRO_1000064634" description="Macrodomain Ter protein">
    <location>
        <begin position="1"/>
        <end position="150"/>
    </location>
</feature>
<reference key="1">
    <citation type="journal article" date="2005" name="Nucleic Acids Res.">
        <title>The genome sequence of Salmonella enterica serovar Choleraesuis, a highly invasive and resistant zoonotic pathogen.</title>
        <authorList>
            <person name="Chiu C.-H."/>
            <person name="Tang P."/>
            <person name="Chu C."/>
            <person name="Hu S."/>
            <person name="Bao Q."/>
            <person name="Yu J."/>
            <person name="Chou Y.-Y."/>
            <person name="Wang H.-S."/>
            <person name="Lee Y.-S."/>
        </authorList>
    </citation>
    <scope>NUCLEOTIDE SEQUENCE [LARGE SCALE GENOMIC DNA]</scope>
    <source>
        <strain>SC-B67</strain>
    </source>
</reference>
<gene>
    <name evidence="1" type="primary">matP</name>
    <name type="ordered locus">SCH_1021</name>
</gene>
<accession>Q57QT4</accession>
<proteinExistence type="inferred from homology"/>
<name>MATP_SALCH</name>
<dbReference type="EMBL" id="AE017220">
    <property type="protein sequence ID" value="AAX64927.1"/>
    <property type="molecule type" value="Genomic_DNA"/>
</dbReference>
<dbReference type="RefSeq" id="WP_000877172.1">
    <property type="nucleotide sequence ID" value="NC_006905.1"/>
</dbReference>
<dbReference type="SMR" id="Q57QT4"/>
<dbReference type="KEGG" id="sec:SCH_1021"/>
<dbReference type="HOGENOM" id="CLU_142157_0_0_6"/>
<dbReference type="Proteomes" id="UP000000538">
    <property type="component" value="Chromosome"/>
</dbReference>
<dbReference type="GO" id="GO:0005737">
    <property type="term" value="C:cytoplasm"/>
    <property type="evidence" value="ECO:0007669"/>
    <property type="project" value="UniProtKB-SubCell"/>
</dbReference>
<dbReference type="GO" id="GO:0043565">
    <property type="term" value="F:sequence-specific DNA binding"/>
    <property type="evidence" value="ECO:0007669"/>
    <property type="project" value="UniProtKB-UniRule"/>
</dbReference>
<dbReference type="GO" id="GO:0051301">
    <property type="term" value="P:cell division"/>
    <property type="evidence" value="ECO:0007669"/>
    <property type="project" value="UniProtKB-UniRule"/>
</dbReference>
<dbReference type="GO" id="GO:0006355">
    <property type="term" value="P:regulation of DNA-templated transcription"/>
    <property type="evidence" value="ECO:0007669"/>
    <property type="project" value="InterPro"/>
</dbReference>
<dbReference type="Gene3D" id="1.20.1270.380">
    <property type="entry name" value="MatP, N-terminal domain"/>
    <property type="match status" value="1"/>
</dbReference>
<dbReference type="Gene3D" id="1.10.1220.10">
    <property type="entry name" value="Met repressor-like"/>
    <property type="match status" value="1"/>
</dbReference>
<dbReference type="HAMAP" id="MF_01073">
    <property type="entry name" value="MatP"/>
    <property type="match status" value="1"/>
</dbReference>
<dbReference type="InterPro" id="IPR013321">
    <property type="entry name" value="Arc_rbn_hlx_hlx"/>
</dbReference>
<dbReference type="InterPro" id="IPR009390">
    <property type="entry name" value="MatP"/>
</dbReference>
<dbReference type="InterPro" id="IPR035375">
    <property type="entry name" value="MatP_C"/>
</dbReference>
<dbReference type="InterPro" id="IPR035087">
    <property type="entry name" value="MatP_N"/>
</dbReference>
<dbReference type="InterPro" id="IPR038339">
    <property type="entry name" value="MatP_N_sf"/>
</dbReference>
<dbReference type="NCBIfam" id="NF003471">
    <property type="entry name" value="PRK05097.1"/>
    <property type="match status" value="1"/>
</dbReference>
<dbReference type="Pfam" id="PF06303">
    <property type="entry name" value="MatP"/>
    <property type="match status" value="1"/>
</dbReference>
<dbReference type="Pfam" id="PF17414">
    <property type="entry name" value="MatP_C"/>
    <property type="match status" value="1"/>
</dbReference>
<protein>
    <recommendedName>
        <fullName evidence="1">Macrodomain Ter protein</fullName>
    </recommendedName>
</protein>
<organism>
    <name type="scientific">Salmonella choleraesuis (strain SC-B67)</name>
    <dbReference type="NCBI Taxonomy" id="321314"/>
    <lineage>
        <taxon>Bacteria</taxon>
        <taxon>Pseudomonadati</taxon>
        <taxon>Pseudomonadota</taxon>
        <taxon>Gammaproteobacteria</taxon>
        <taxon>Enterobacterales</taxon>
        <taxon>Enterobacteriaceae</taxon>
        <taxon>Salmonella</taxon>
    </lineage>
</organism>
<comment type="function">
    <text evidence="1">Required for spatial organization of the terminus region of the chromosome (Ter macrodomain) during the cell cycle. Prevents early segregation of duplicated Ter macrodomains during cell division. Binds specifically to matS, which is a 13 bp signature motif repeated within the Ter macrodomain.</text>
</comment>
<comment type="subunit">
    <text evidence="1">Homodimer.</text>
</comment>
<comment type="subcellular location">
    <subcellularLocation>
        <location evidence="1">Cytoplasm</location>
    </subcellularLocation>
</comment>
<comment type="similarity">
    <text evidence="1">Belongs to the MatP family.</text>
</comment>